<comment type="function">
    <text>Has a stimulative effect on the contraction of gut muscles.</text>
</comment>
<comment type="similarity">
    <text evidence="2">To insects allatotropin.</text>
</comment>
<protein>
    <recommendedName>
        <fullName>Myoactive tetradecapeptide</fullName>
        <shortName>ETP</shortName>
    </recommendedName>
</protein>
<keyword id="KW-0027">Amidation</keyword>
<keyword id="KW-0903">Direct protein sequencing</keyword>
<keyword id="KW-0527">Neuropeptide</keyword>
<sequence>GFKDGAADRISHGF</sequence>
<name>MY14_EISFE</name>
<proteinExistence type="evidence at protein level"/>
<accession>P46979</accession>
<feature type="peptide" id="PRO_0000044173" description="Myoactive tetradecapeptide">
    <location>
        <begin position="1"/>
        <end position="14"/>
    </location>
</feature>
<feature type="modified residue" description="Phenylalanine amide" evidence="1">
    <location>
        <position position="14"/>
    </location>
</feature>
<evidence type="ECO:0000269" key="1">
    <source>
    </source>
</evidence>
<evidence type="ECO:0000305" key="2"/>
<dbReference type="GO" id="GO:0005576">
    <property type="term" value="C:extracellular region"/>
    <property type="evidence" value="ECO:0007669"/>
    <property type="project" value="InterPro"/>
</dbReference>
<dbReference type="GO" id="GO:0005184">
    <property type="term" value="F:neuropeptide hormone activity"/>
    <property type="evidence" value="ECO:0007669"/>
    <property type="project" value="InterPro"/>
</dbReference>
<dbReference type="GO" id="GO:0007218">
    <property type="term" value="P:neuropeptide signaling pathway"/>
    <property type="evidence" value="ECO:0007669"/>
    <property type="project" value="UniProtKB-KW"/>
</dbReference>
<dbReference type="InterPro" id="IPR012619">
    <property type="entry name" value="Tetradecapep"/>
</dbReference>
<dbReference type="Pfam" id="PF08187">
    <property type="entry name" value="Tetradecapep"/>
    <property type="match status" value="1"/>
</dbReference>
<reference key="1">
    <citation type="journal article" date="1995" name="Peptides">
        <title>A novel gut tetradecapeptide isolated from the earthworm, Eisenia foetida.</title>
        <authorList>
            <person name="Ukena K."/>
            <person name="Oumi T."/>
            <person name="Matsushima O."/>
            <person name="Ikeda T."/>
            <person name="Fujita T."/>
            <person name="Minakata H."/>
            <person name="Nomoto K."/>
        </authorList>
    </citation>
    <scope>PROTEIN SEQUENCE</scope>
    <scope>AMIDATION AT PHE-14</scope>
    <scope>SYNTHESIS</scope>
    <source>
        <tissue>Gut</tissue>
    </source>
</reference>
<organism>
    <name type="scientific">Eisenia fetida</name>
    <name type="common">Red wiggler worm</name>
    <dbReference type="NCBI Taxonomy" id="6396"/>
    <lineage>
        <taxon>Eukaryota</taxon>
        <taxon>Metazoa</taxon>
        <taxon>Spiralia</taxon>
        <taxon>Lophotrochozoa</taxon>
        <taxon>Annelida</taxon>
        <taxon>Clitellata</taxon>
        <taxon>Oligochaeta</taxon>
        <taxon>Crassiclitellata</taxon>
        <taxon>Lumbricina</taxon>
        <taxon>Lumbricidae</taxon>
        <taxon>Lumbricinae</taxon>
        <taxon>Eisenia</taxon>
    </lineage>
</organism>